<name>CH60_TROWH</name>
<comment type="function">
    <text evidence="1">Together with its co-chaperonin GroES, plays an essential role in assisting protein folding. The GroEL-GroES system forms a nano-cage that allows encapsulation of the non-native substrate proteins and provides a physical environment optimized to promote and accelerate protein folding.</text>
</comment>
<comment type="catalytic activity">
    <reaction evidence="1">
        <text>ATP + H2O + a folded polypeptide = ADP + phosphate + an unfolded polypeptide.</text>
        <dbReference type="EC" id="5.6.1.7"/>
    </reaction>
</comment>
<comment type="subunit">
    <text evidence="1">Forms a cylinder of 14 subunits composed of two heptameric rings stacked back-to-back. Interacts with the co-chaperonin GroES.</text>
</comment>
<comment type="subcellular location">
    <subcellularLocation>
        <location evidence="1">Cytoplasm</location>
    </subcellularLocation>
</comment>
<comment type="similarity">
    <text evidence="1">Belongs to the chaperonin (HSP60) family.</text>
</comment>
<gene>
    <name evidence="1" type="primary">groEL</name>
    <name evidence="1" type="synonym">groL</name>
</gene>
<evidence type="ECO:0000255" key="1">
    <source>
        <dbReference type="HAMAP-Rule" id="MF_00600"/>
    </source>
</evidence>
<evidence type="ECO:0000256" key="2">
    <source>
        <dbReference type="SAM" id="MobiDB-lite"/>
    </source>
</evidence>
<accession>P69204</accession>
<accession>Q9KJC0</accession>
<proteinExistence type="inferred from homology"/>
<dbReference type="EC" id="5.6.1.7" evidence="1"/>
<dbReference type="EMBL" id="AF184091">
    <property type="protein sequence ID" value="AAF76292.2"/>
    <property type="molecule type" value="Genomic_DNA"/>
</dbReference>
<dbReference type="SMR" id="P69204"/>
<dbReference type="GO" id="GO:0005737">
    <property type="term" value="C:cytoplasm"/>
    <property type="evidence" value="ECO:0007669"/>
    <property type="project" value="UniProtKB-SubCell"/>
</dbReference>
<dbReference type="GO" id="GO:0005524">
    <property type="term" value="F:ATP binding"/>
    <property type="evidence" value="ECO:0007669"/>
    <property type="project" value="UniProtKB-UniRule"/>
</dbReference>
<dbReference type="GO" id="GO:0140662">
    <property type="term" value="F:ATP-dependent protein folding chaperone"/>
    <property type="evidence" value="ECO:0007669"/>
    <property type="project" value="InterPro"/>
</dbReference>
<dbReference type="GO" id="GO:0016853">
    <property type="term" value="F:isomerase activity"/>
    <property type="evidence" value="ECO:0007669"/>
    <property type="project" value="UniProtKB-KW"/>
</dbReference>
<dbReference type="GO" id="GO:0051082">
    <property type="term" value="F:unfolded protein binding"/>
    <property type="evidence" value="ECO:0007669"/>
    <property type="project" value="UniProtKB-UniRule"/>
</dbReference>
<dbReference type="GO" id="GO:0042026">
    <property type="term" value="P:protein refolding"/>
    <property type="evidence" value="ECO:0007669"/>
    <property type="project" value="UniProtKB-UniRule"/>
</dbReference>
<dbReference type="CDD" id="cd03344">
    <property type="entry name" value="GroEL"/>
    <property type="match status" value="1"/>
</dbReference>
<dbReference type="FunFam" id="3.50.7.10:FF:000001">
    <property type="entry name" value="60 kDa chaperonin"/>
    <property type="match status" value="1"/>
</dbReference>
<dbReference type="Gene3D" id="3.50.7.10">
    <property type="entry name" value="GroEL"/>
    <property type="match status" value="1"/>
</dbReference>
<dbReference type="Gene3D" id="1.10.560.10">
    <property type="entry name" value="GroEL-like equatorial domain"/>
    <property type="match status" value="1"/>
</dbReference>
<dbReference type="Gene3D" id="3.30.260.10">
    <property type="entry name" value="TCP-1-like chaperonin intermediate domain"/>
    <property type="match status" value="1"/>
</dbReference>
<dbReference type="HAMAP" id="MF_00600">
    <property type="entry name" value="CH60"/>
    <property type="match status" value="1"/>
</dbReference>
<dbReference type="InterPro" id="IPR018370">
    <property type="entry name" value="Chaperonin_Cpn60_CS"/>
</dbReference>
<dbReference type="InterPro" id="IPR001844">
    <property type="entry name" value="Cpn60/GroEL"/>
</dbReference>
<dbReference type="InterPro" id="IPR002423">
    <property type="entry name" value="Cpn60/GroEL/TCP-1"/>
</dbReference>
<dbReference type="InterPro" id="IPR027409">
    <property type="entry name" value="GroEL-like_apical_dom_sf"/>
</dbReference>
<dbReference type="InterPro" id="IPR027413">
    <property type="entry name" value="GROEL-like_equatorial_sf"/>
</dbReference>
<dbReference type="InterPro" id="IPR027410">
    <property type="entry name" value="TCP-1-like_intermed_sf"/>
</dbReference>
<dbReference type="NCBIfam" id="TIGR02348">
    <property type="entry name" value="GroEL"/>
    <property type="match status" value="1"/>
</dbReference>
<dbReference type="NCBIfam" id="NF000592">
    <property type="entry name" value="PRK00013.1"/>
    <property type="match status" value="1"/>
</dbReference>
<dbReference type="NCBIfam" id="NF009487">
    <property type="entry name" value="PRK12849.1"/>
    <property type="match status" value="1"/>
</dbReference>
<dbReference type="NCBIfam" id="NF009488">
    <property type="entry name" value="PRK12850.1"/>
    <property type="match status" value="1"/>
</dbReference>
<dbReference type="NCBIfam" id="NF009489">
    <property type="entry name" value="PRK12851.1"/>
    <property type="match status" value="1"/>
</dbReference>
<dbReference type="PANTHER" id="PTHR45633">
    <property type="entry name" value="60 KDA HEAT SHOCK PROTEIN, MITOCHONDRIAL"/>
    <property type="match status" value="1"/>
</dbReference>
<dbReference type="Pfam" id="PF00118">
    <property type="entry name" value="Cpn60_TCP1"/>
    <property type="match status" value="1"/>
</dbReference>
<dbReference type="PRINTS" id="PR00298">
    <property type="entry name" value="CHAPERONIN60"/>
</dbReference>
<dbReference type="SUPFAM" id="SSF52029">
    <property type="entry name" value="GroEL apical domain-like"/>
    <property type="match status" value="1"/>
</dbReference>
<dbReference type="SUPFAM" id="SSF48592">
    <property type="entry name" value="GroEL equatorial domain-like"/>
    <property type="match status" value="1"/>
</dbReference>
<dbReference type="SUPFAM" id="SSF54849">
    <property type="entry name" value="GroEL-intermediate domain like"/>
    <property type="match status" value="1"/>
</dbReference>
<dbReference type="PROSITE" id="PS00296">
    <property type="entry name" value="CHAPERONINS_CPN60"/>
    <property type="match status" value="1"/>
</dbReference>
<feature type="chain" id="PRO_0000063588" description="Chaperonin GroEL">
    <location>
        <begin position="1"/>
        <end position="540"/>
    </location>
</feature>
<feature type="region of interest" description="Disordered" evidence="2">
    <location>
        <begin position="520"/>
        <end position="540"/>
    </location>
</feature>
<feature type="binding site" evidence="1">
    <location>
        <begin position="29"/>
        <end position="32"/>
    </location>
    <ligand>
        <name>ATP</name>
        <dbReference type="ChEBI" id="CHEBI:30616"/>
    </ligand>
</feature>
<feature type="binding site" evidence="1">
    <location>
        <begin position="86"/>
        <end position="90"/>
    </location>
    <ligand>
        <name>ATP</name>
        <dbReference type="ChEBI" id="CHEBI:30616"/>
    </ligand>
</feature>
<feature type="binding site" evidence="1">
    <location>
        <position position="413"/>
    </location>
    <ligand>
        <name>ATP</name>
        <dbReference type="ChEBI" id="CHEBI:30616"/>
    </ligand>
</feature>
<feature type="binding site" evidence="1">
    <location>
        <position position="493"/>
    </location>
    <ligand>
        <name>ATP</name>
        <dbReference type="ChEBI" id="CHEBI:30616"/>
    </ligand>
</feature>
<reference key="1">
    <citation type="submission" date="2001-03" db="EMBL/GenBank/DDBJ databases">
        <title>Complete sequence of the 'Tropheryma whippelii' hsp65-gene and its use for phylogeny.</title>
        <authorList>
            <person name="Morgenegg S."/>
            <person name="Drancourt M."/>
            <person name="Raoult D."/>
            <person name="Altwegg M."/>
        </authorList>
    </citation>
    <scope>NUCLEOTIDE SEQUENCE [GENOMIC DNA]</scope>
</reference>
<reference key="2">
    <citation type="journal article" date="2000" name="J. Clin. Microbiol.">
        <title>Cloning and sequencing of a part of the heat shock protein 65 gene (hsp65) of 'Tropheryma whippelii' and its use for detection of 'T. whippelii' in clinical specimens by PCR.</title>
        <authorList>
            <person name="Morgenegg S."/>
            <person name="Dutly F."/>
            <person name="Altwegg M."/>
        </authorList>
    </citation>
    <scope>NUCLEOTIDE SEQUENCE [GENOMIC DNA] OF 65-271</scope>
</reference>
<sequence length="540" mass="57014">MAKKITFNEDARRGLERGLNTLADTVKVTLGPRGRNVVLEKKWGAPVITNDGVTIAKEIELDDPYEKIGAELVKEVAKKTDDVAGDGTTTSVVLAQAMVREGLKNVAAGADPISLRRGIEKSVAAVSKALLTSAKEVETEAEIAACASISAGDPQIGDIIAQALEKVGKEGVVTVEESNTFGTELEITEGMRFDKGYLSAYFVTDAERQETVFENPYILICDSKISSVKDLLPVVDKVIQSGKQLLIIAEDVDGEALATLVVNKIRGIFKSVAVKAPGFGDRRKMMLQDIAVLTGGQVISEEVGLKLENATLDLLGRARKVVVSKDETTIVDGAGSSDQIAGRVSQIRKELENSDSDYDREKLQERLAKLSGGVAVIRSGAATEVELKERKHRIEDAVRNAKAAVEEGIVAGGGAALLQSGTSALKDLQLTSEEAVGRNIVRSAIEAPLRQISLNAGLEPGVVVGKVSSLPQGHGLDASTGEYVDMLSRGISDPVKVTRSALENAASIAGLFLTTEAVVAEKPEPKPAPGPADPGAGMDF</sequence>
<protein>
    <recommendedName>
        <fullName evidence="1">Chaperonin GroEL</fullName>
        <ecNumber evidence="1">5.6.1.7</ecNumber>
    </recommendedName>
    <alternativeName>
        <fullName evidence="1">60 kDa chaperonin</fullName>
    </alternativeName>
    <alternativeName>
        <fullName evidence="1">Chaperonin-60</fullName>
        <shortName evidence="1">Cpn60</shortName>
    </alternativeName>
    <alternativeName>
        <fullName>Heat shock protein 65</fullName>
    </alternativeName>
</protein>
<organism>
    <name type="scientific">Tropheryma whipplei</name>
    <name type="common">Whipple's bacillus</name>
    <name type="synonym">Tropheryma whippelii</name>
    <dbReference type="NCBI Taxonomy" id="2039"/>
    <lineage>
        <taxon>Bacteria</taxon>
        <taxon>Bacillati</taxon>
        <taxon>Actinomycetota</taxon>
        <taxon>Actinomycetes</taxon>
        <taxon>Micrococcales</taxon>
        <taxon>Tropherymataceae</taxon>
        <taxon>Tropheryma</taxon>
    </lineage>
</organism>
<keyword id="KW-0067">ATP-binding</keyword>
<keyword id="KW-0143">Chaperone</keyword>
<keyword id="KW-0963">Cytoplasm</keyword>
<keyword id="KW-0413">Isomerase</keyword>
<keyword id="KW-0547">Nucleotide-binding</keyword>
<keyword id="KW-0346">Stress response</keyword>